<proteinExistence type="inferred from homology"/>
<evidence type="ECO:0000250" key="1">
    <source>
        <dbReference type="UniProtKB" id="P56761"/>
    </source>
</evidence>
<evidence type="ECO:0000255" key="2">
    <source>
        <dbReference type="HAMAP-Rule" id="MF_01383"/>
    </source>
</evidence>
<protein>
    <recommendedName>
        <fullName evidence="2">Photosystem II D2 protein</fullName>
        <shortName evidence="2">PSII D2 protein</shortName>
        <ecNumber evidence="2">1.10.3.9</ecNumber>
    </recommendedName>
    <alternativeName>
        <fullName evidence="2">Photosystem Q(A) protein</fullName>
    </alternativeName>
</protein>
<accession>A4QJB0</accession>
<name>PSBD_AETCO</name>
<comment type="function">
    <text evidence="2">Photosystem II (PSII) is a light-driven water:plastoquinone oxidoreductase that uses light energy to abstract electrons from H(2)O, generating O(2) and a proton gradient subsequently used for ATP formation. It consists of a core antenna complex that captures photons, and an electron transfer chain that converts photonic excitation into a charge separation. The D1/D2 (PsbA/PsbD) reaction center heterodimer binds P680, the primary electron donor of PSII as well as several subsequent electron acceptors. D2 is needed for assembly of a stable PSII complex.</text>
</comment>
<comment type="catalytic activity">
    <reaction evidence="2">
        <text>2 a plastoquinone + 4 hnu + 2 H2O = 2 a plastoquinol + O2</text>
        <dbReference type="Rhea" id="RHEA:36359"/>
        <dbReference type="Rhea" id="RHEA-COMP:9561"/>
        <dbReference type="Rhea" id="RHEA-COMP:9562"/>
        <dbReference type="ChEBI" id="CHEBI:15377"/>
        <dbReference type="ChEBI" id="CHEBI:15379"/>
        <dbReference type="ChEBI" id="CHEBI:17757"/>
        <dbReference type="ChEBI" id="CHEBI:30212"/>
        <dbReference type="ChEBI" id="CHEBI:62192"/>
        <dbReference type="EC" id="1.10.3.9"/>
    </reaction>
</comment>
<comment type="cofactor">
    <text evidence="2">The D1/D2 heterodimer binds P680, chlorophylls that are the primary electron donor of PSII, and subsequent electron acceptors. It shares a non-heme iron and each subunit binds pheophytin, quinone, additional chlorophylls, carotenoids and lipids. There is also a Cl(-1) ion associated with D1 and D2, which is required for oxygen evolution. The PSII complex binds additional chlorophylls, carotenoids and specific lipids.</text>
</comment>
<comment type="subunit">
    <text evidence="2">PSII is composed of 1 copy each of membrane proteins PsbA, PsbB, PsbC, PsbD, PsbE, PsbF, PsbH, PsbI, PsbJ, PsbK, PsbL, PsbM, PsbT, PsbX, PsbY, PsbZ, Psb30/Ycf12, at least 3 peripheral proteins of the oxygen-evolving complex and a large number of cofactors. It forms dimeric complexes.</text>
</comment>
<comment type="subcellular location">
    <subcellularLocation>
        <location evidence="2">Plastid</location>
        <location evidence="2">Chloroplast thylakoid membrane</location>
        <topology evidence="2">Multi-pass membrane protein</topology>
    </subcellularLocation>
</comment>
<comment type="miscellaneous">
    <text evidence="2">2 of the reaction center chlorophylls (ChlD1 and ChlD2) are entirely coordinated by water.</text>
</comment>
<comment type="similarity">
    <text evidence="2">Belongs to the reaction center PufL/M/PsbA/D family.</text>
</comment>
<keyword id="KW-0007">Acetylation</keyword>
<keyword id="KW-0148">Chlorophyll</keyword>
<keyword id="KW-0150">Chloroplast</keyword>
<keyword id="KW-0157">Chromophore</keyword>
<keyword id="KW-0249">Electron transport</keyword>
<keyword id="KW-0408">Iron</keyword>
<keyword id="KW-0460">Magnesium</keyword>
<keyword id="KW-0472">Membrane</keyword>
<keyword id="KW-0479">Metal-binding</keyword>
<keyword id="KW-0560">Oxidoreductase</keyword>
<keyword id="KW-0597">Phosphoprotein</keyword>
<keyword id="KW-0602">Photosynthesis</keyword>
<keyword id="KW-0604">Photosystem II</keyword>
<keyword id="KW-0934">Plastid</keyword>
<keyword id="KW-0793">Thylakoid</keyword>
<keyword id="KW-0812">Transmembrane</keyword>
<keyword id="KW-1133">Transmembrane helix</keyword>
<keyword id="KW-0813">Transport</keyword>
<sequence length="353" mass="39578">MTIALGKFTKDEKDLFDIMDDWLRRDRFVFVGWSGLLLFPCAYFALGGWFTGTTFVTSWYTHGLASSYLEGCNFLTAAVSTPANSLAHSLLLLWGPEAQGDFTRWCQLGGLWTFVALHGAFALIGFMLRQFELARSVQLRPYNAIAFSGPIAVFVSVFLIYPLGQSGWFFAPSFGVAAIFRFILFFQGFHNWTLNPFHMMGVAGVLGAALLCAIHGATVENTLFEDGDGANTFRAFNPTQAEETYSMVTANRFWSQIFGVAFSNKRWLHFFMLFVPVTGLWMSALGVVGLALNLRAYDFVSQEIRAAEDPEFETFYTKNILLNEGIRAWMAAQDQPHENLIFPEEVLPRGNAL</sequence>
<geneLocation type="chloroplast"/>
<reference key="1">
    <citation type="submission" date="2007-03" db="EMBL/GenBank/DDBJ databases">
        <title>Sequencing analysis of Aethionema coridifolium chloroplast DNA.</title>
        <authorList>
            <person name="Hosouchi T."/>
            <person name="Tsuruoka H."/>
            <person name="Kotani H."/>
        </authorList>
    </citation>
    <scope>NUCLEOTIDE SEQUENCE [LARGE SCALE GENOMIC DNA]</scope>
</reference>
<organism>
    <name type="scientific">Aethionema cordifolium</name>
    <name type="common">Lebanon stonecress</name>
    <dbReference type="NCBI Taxonomy" id="434059"/>
    <lineage>
        <taxon>Eukaryota</taxon>
        <taxon>Viridiplantae</taxon>
        <taxon>Streptophyta</taxon>
        <taxon>Embryophyta</taxon>
        <taxon>Tracheophyta</taxon>
        <taxon>Spermatophyta</taxon>
        <taxon>Magnoliopsida</taxon>
        <taxon>eudicotyledons</taxon>
        <taxon>Gunneridae</taxon>
        <taxon>Pentapetalae</taxon>
        <taxon>rosids</taxon>
        <taxon>malvids</taxon>
        <taxon>Brassicales</taxon>
        <taxon>Brassicaceae</taxon>
        <taxon>Aethionemeae</taxon>
        <taxon>Aethionema</taxon>
    </lineage>
</organism>
<dbReference type="EC" id="1.10.3.9" evidence="2"/>
<dbReference type="EMBL" id="AP009366">
    <property type="protein sequence ID" value="BAF49765.1"/>
    <property type="molecule type" value="Genomic_DNA"/>
</dbReference>
<dbReference type="RefSeq" id="YP_001122941.1">
    <property type="nucleotide sequence ID" value="NC_009265.1"/>
</dbReference>
<dbReference type="SMR" id="A4QJB0"/>
<dbReference type="GeneID" id="4968589"/>
<dbReference type="GO" id="GO:0009535">
    <property type="term" value="C:chloroplast thylakoid membrane"/>
    <property type="evidence" value="ECO:0007669"/>
    <property type="project" value="UniProtKB-SubCell"/>
</dbReference>
<dbReference type="GO" id="GO:0009523">
    <property type="term" value="C:photosystem II"/>
    <property type="evidence" value="ECO:0007669"/>
    <property type="project" value="UniProtKB-KW"/>
</dbReference>
<dbReference type="GO" id="GO:0016168">
    <property type="term" value="F:chlorophyll binding"/>
    <property type="evidence" value="ECO:0007669"/>
    <property type="project" value="UniProtKB-UniRule"/>
</dbReference>
<dbReference type="GO" id="GO:0045156">
    <property type="term" value="F:electron transporter, transferring electrons within the cyclic electron transport pathway of photosynthesis activity"/>
    <property type="evidence" value="ECO:0007669"/>
    <property type="project" value="InterPro"/>
</dbReference>
<dbReference type="GO" id="GO:0005506">
    <property type="term" value="F:iron ion binding"/>
    <property type="evidence" value="ECO:0007669"/>
    <property type="project" value="UniProtKB-UniRule"/>
</dbReference>
<dbReference type="GO" id="GO:0010242">
    <property type="term" value="F:oxygen evolving activity"/>
    <property type="evidence" value="ECO:0007669"/>
    <property type="project" value="UniProtKB-EC"/>
</dbReference>
<dbReference type="GO" id="GO:0009772">
    <property type="term" value="P:photosynthetic electron transport in photosystem II"/>
    <property type="evidence" value="ECO:0007669"/>
    <property type="project" value="InterPro"/>
</dbReference>
<dbReference type="CDD" id="cd09288">
    <property type="entry name" value="Photosystem-II_D2"/>
    <property type="match status" value="1"/>
</dbReference>
<dbReference type="FunFam" id="1.20.85.10:FF:000001">
    <property type="entry name" value="photosystem II D2 protein-like"/>
    <property type="match status" value="1"/>
</dbReference>
<dbReference type="Gene3D" id="1.20.85.10">
    <property type="entry name" value="Photosystem II protein D1-like"/>
    <property type="match status" value="1"/>
</dbReference>
<dbReference type="HAMAP" id="MF_01383">
    <property type="entry name" value="PSII_PsbD_D2"/>
    <property type="match status" value="1"/>
</dbReference>
<dbReference type="InterPro" id="IPR055266">
    <property type="entry name" value="D1/D2"/>
</dbReference>
<dbReference type="InterPro" id="IPR036854">
    <property type="entry name" value="Photo_II_D1/D2_sf"/>
</dbReference>
<dbReference type="InterPro" id="IPR000484">
    <property type="entry name" value="Photo_RC_L/M"/>
</dbReference>
<dbReference type="InterPro" id="IPR055265">
    <property type="entry name" value="Photo_RC_L/M_CS"/>
</dbReference>
<dbReference type="InterPro" id="IPR005868">
    <property type="entry name" value="PSII_PsbD/D2"/>
</dbReference>
<dbReference type="NCBIfam" id="TIGR01152">
    <property type="entry name" value="psbD"/>
    <property type="match status" value="1"/>
</dbReference>
<dbReference type="PANTHER" id="PTHR33149:SF57">
    <property type="entry name" value="PHOTOSYSTEM II D2 PROTEIN"/>
    <property type="match status" value="1"/>
</dbReference>
<dbReference type="PANTHER" id="PTHR33149">
    <property type="entry name" value="PHOTOSYSTEM II PROTEIN D1"/>
    <property type="match status" value="1"/>
</dbReference>
<dbReference type="Pfam" id="PF00124">
    <property type="entry name" value="Photo_RC"/>
    <property type="match status" value="1"/>
</dbReference>
<dbReference type="PRINTS" id="PR00256">
    <property type="entry name" value="REACTNCENTRE"/>
</dbReference>
<dbReference type="SUPFAM" id="SSF81483">
    <property type="entry name" value="Bacterial photosystem II reaction centre, L and M subunits"/>
    <property type="match status" value="1"/>
</dbReference>
<dbReference type="PROSITE" id="PS00244">
    <property type="entry name" value="REACTION_CENTER"/>
    <property type="match status" value="1"/>
</dbReference>
<gene>
    <name evidence="2" type="primary">psbD</name>
</gene>
<feature type="initiator methionine" description="Removed" evidence="1">
    <location>
        <position position="1"/>
    </location>
</feature>
<feature type="chain" id="PRO_0000359617" description="Photosystem II D2 protein">
    <location>
        <begin position="2"/>
        <end position="353"/>
    </location>
</feature>
<feature type="transmembrane region" description="Helical" evidence="2">
    <location>
        <begin position="41"/>
        <end position="61"/>
    </location>
</feature>
<feature type="transmembrane region" description="Helical" evidence="2">
    <location>
        <begin position="125"/>
        <end position="141"/>
    </location>
</feature>
<feature type="transmembrane region" description="Helical" evidence="2">
    <location>
        <begin position="153"/>
        <end position="166"/>
    </location>
</feature>
<feature type="transmembrane region" description="Helical" evidence="2">
    <location>
        <begin position="208"/>
        <end position="228"/>
    </location>
</feature>
<feature type="transmembrane region" description="Helical" evidence="2">
    <location>
        <begin position="279"/>
        <end position="295"/>
    </location>
</feature>
<feature type="binding site" description="axial binding residue" evidence="2">
    <location>
        <position position="118"/>
    </location>
    <ligand>
        <name>chlorophyll a</name>
        <dbReference type="ChEBI" id="CHEBI:58416"/>
        <label>ChlzD2</label>
    </ligand>
    <ligandPart>
        <name>Mg</name>
        <dbReference type="ChEBI" id="CHEBI:25107"/>
    </ligandPart>
</feature>
<feature type="binding site" evidence="2">
    <location>
        <position position="130"/>
    </location>
    <ligand>
        <name>pheophytin a</name>
        <dbReference type="ChEBI" id="CHEBI:136840"/>
        <label>D2</label>
    </ligand>
</feature>
<feature type="binding site" evidence="2">
    <location>
        <position position="143"/>
    </location>
    <ligand>
        <name>pheophytin a</name>
        <dbReference type="ChEBI" id="CHEBI:136840"/>
        <label>D2</label>
    </ligand>
</feature>
<feature type="binding site" description="axial binding residue" evidence="2">
    <location>
        <position position="198"/>
    </location>
    <ligand>
        <name>chlorophyll a</name>
        <dbReference type="ChEBI" id="CHEBI:58416"/>
        <label>PD2</label>
    </ligand>
    <ligandPart>
        <name>Mg</name>
        <dbReference type="ChEBI" id="CHEBI:25107"/>
    </ligandPart>
</feature>
<feature type="binding site" evidence="2">
    <location>
        <position position="215"/>
    </location>
    <ligand>
        <name>a plastoquinone</name>
        <dbReference type="ChEBI" id="CHEBI:17757"/>
        <label>Q(A)</label>
    </ligand>
</feature>
<feature type="binding site" evidence="2">
    <location>
        <position position="215"/>
    </location>
    <ligand>
        <name>Fe cation</name>
        <dbReference type="ChEBI" id="CHEBI:24875"/>
        <note>ligand shared with heterodimeric partner</note>
    </ligand>
</feature>
<feature type="binding site" evidence="2">
    <location>
        <position position="262"/>
    </location>
    <ligand>
        <name>a plastoquinone</name>
        <dbReference type="ChEBI" id="CHEBI:17757"/>
        <label>Q(A)</label>
    </ligand>
</feature>
<feature type="binding site" evidence="2">
    <location>
        <position position="269"/>
    </location>
    <ligand>
        <name>Fe cation</name>
        <dbReference type="ChEBI" id="CHEBI:24875"/>
        <note>ligand shared with heterodimeric partner</note>
    </ligand>
</feature>
<feature type="modified residue" description="N-acetylthreonine" evidence="1">
    <location>
        <position position="2"/>
    </location>
</feature>
<feature type="modified residue" description="Phosphothreonine" evidence="1">
    <location>
        <position position="2"/>
    </location>
</feature>